<accession>A5IIT6</accession>
<protein>
    <recommendedName>
        <fullName evidence="1">GTPase Era</fullName>
    </recommendedName>
</protein>
<dbReference type="EMBL" id="CP000702">
    <property type="protein sequence ID" value="ABQ46109.1"/>
    <property type="molecule type" value="Genomic_DNA"/>
</dbReference>
<dbReference type="SMR" id="A5IIT6"/>
<dbReference type="STRING" id="390874.Tpet_0080"/>
<dbReference type="KEGG" id="tpt:Tpet_0080"/>
<dbReference type="eggNOG" id="COG1159">
    <property type="taxonomic scope" value="Bacteria"/>
</dbReference>
<dbReference type="HOGENOM" id="CLU_038009_1_0_0"/>
<dbReference type="Proteomes" id="UP000006558">
    <property type="component" value="Chromosome"/>
</dbReference>
<dbReference type="GO" id="GO:0005829">
    <property type="term" value="C:cytosol"/>
    <property type="evidence" value="ECO:0007669"/>
    <property type="project" value="TreeGrafter"/>
</dbReference>
<dbReference type="GO" id="GO:0005886">
    <property type="term" value="C:plasma membrane"/>
    <property type="evidence" value="ECO:0007669"/>
    <property type="project" value="UniProtKB-SubCell"/>
</dbReference>
<dbReference type="GO" id="GO:0005525">
    <property type="term" value="F:GTP binding"/>
    <property type="evidence" value="ECO:0007669"/>
    <property type="project" value="UniProtKB-UniRule"/>
</dbReference>
<dbReference type="GO" id="GO:0003924">
    <property type="term" value="F:GTPase activity"/>
    <property type="evidence" value="ECO:0007669"/>
    <property type="project" value="UniProtKB-UniRule"/>
</dbReference>
<dbReference type="GO" id="GO:0043024">
    <property type="term" value="F:ribosomal small subunit binding"/>
    <property type="evidence" value="ECO:0007669"/>
    <property type="project" value="TreeGrafter"/>
</dbReference>
<dbReference type="GO" id="GO:0070181">
    <property type="term" value="F:small ribosomal subunit rRNA binding"/>
    <property type="evidence" value="ECO:0007669"/>
    <property type="project" value="UniProtKB-UniRule"/>
</dbReference>
<dbReference type="GO" id="GO:0000028">
    <property type="term" value="P:ribosomal small subunit assembly"/>
    <property type="evidence" value="ECO:0007669"/>
    <property type="project" value="TreeGrafter"/>
</dbReference>
<dbReference type="CDD" id="cd04163">
    <property type="entry name" value="Era"/>
    <property type="match status" value="1"/>
</dbReference>
<dbReference type="CDD" id="cd22534">
    <property type="entry name" value="KH-II_Era"/>
    <property type="match status" value="1"/>
</dbReference>
<dbReference type="FunFam" id="3.30.300.20:FF:000003">
    <property type="entry name" value="GTPase Era"/>
    <property type="match status" value="1"/>
</dbReference>
<dbReference type="FunFam" id="3.40.50.300:FF:000094">
    <property type="entry name" value="GTPase Era"/>
    <property type="match status" value="1"/>
</dbReference>
<dbReference type="Gene3D" id="3.30.300.20">
    <property type="match status" value="1"/>
</dbReference>
<dbReference type="Gene3D" id="3.40.50.300">
    <property type="entry name" value="P-loop containing nucleotide triphosphate hydrolases"/>
    <property type="match status" value="1"/>
</dbReference>
<dbReference type="HAMAP" id="MF_00367">
    <property type="entry name" value="GTPase_Era"/>
    <property type="match status" value="1"/>
</dbReference>
<dbReference type="InterPro" id="IPR030388">
    <property type="entry name" value="G_ERA_dom"/>
</dbReference>
<dbReference type="InterPro" id="IPR006073">
    <property type="entry name" value="GTP-bd"/>
</dbReference>
<dbReference type="InterPro" id="IPR005662">
    <property type="entry name" value="GTPase_Era-like"/>
</dbReference>
<dbReference type="InterPro" id="IPR015946">
    <property type="entry name" value="KH_dom-like_a/b"/>
</dbReference>
<dbReference type="InterPro" id="IPR004044">
    <property type="entry name" value="KH_dom_type_2"/>
</dbReference>
<dbReference type="InterPro" id="IPR009019">
    <property type="entry name" value="KH_sf_prok-type"/>
</dbReference>
<dbReference type="InterPro" id="IPR027417">
    <property type="entry name" value="P-loop_NTPase"/>
</dbReference>
<dbReference type="InterPro" id="IPR005225">
    <property type="entry name" value="Small_GTP-bd"/>
</dbReference>
<dbReference type="NCBIfam" id="TIGR00436">
    <property type="entry name" value="era"/>
    <property type="match status" value="1"/>
</dbReference>
<dbReference type="NCBIfam" id="NF000908">
    <property type="entry name" value="PRK00089.1"/>
    <property type="match status" value="1"/>
</dbReference>
<dbReference type="NCBIfam" id="TIGR00231">
    <property type="entry name" value="small_GTP"/>
    <property type="match status" value="1"/>
</dbReference>
<dbReference type="PANTHER" id="PTHR42698">
    <property type="entry name" value="GTPASE ERA"/>
    <property type="match status" value="1"/>
</dbReference>
<dbReference type="PANTHER" id="PTHR42698:SF1">
    <property type="entry name" value="GTPASE ERA, MITOCHONDRIAL"/>
    <property type="match status" value="1"/>
</dbReference>
<dbReference type="Pfam" id="PF07650">
    <property type="entry name" value="KH_2"/>
    <property type="match status" value="1"/>
</dbReference>
<dbReference type="Pfam" id="PF01926">
    <property type="entry name" value="MMR_HSR1"/>
    <property type="match status" value="1"/>
</dbReference>
<dbReference type="SUPFAM" id="SSF52540">
    <property type="entry name" value="P-loop containing nucleoside triphosphate hydrolases"/>
    <property type="match status" value="1"/>
</dbReference>
<dbReference type="SUPFAM" id="SSF54814">
    <property type="entry name" value="Prokaryotic type KH domain (KH-domain type II)"/>
    <property type="match status" value="1"/>
</dbReference>
<dbReference type="PROSITE" id="PS51713">
    <property type="entry name" value="G_ERA"/>
    <property type="match status" value="1"/>
</dbReference>
<dbReference type="PROSITE" id="PS50823">
    <property type="entry name" value="KH_TYPE_2"/>
    <property type="match status" value="1"/>
</dbReference>
<keyword id="KW-0997">Cell inner membrane</keyword>
<keyword id="KW-1003">Cell membrane</keyword>
<keyword id="KW-0963">Cytoplasm</keyword>
<keyword id="KW-0342">GTP-binding</keyword>
<keyword id="KW-0472">Membrane</keyword>
<keyword id="KW-0547">Nucleotide-binding</keyword>
<keyword id="KW-0690">Ribosome biogenesis</keyword>
<keyword id="KW-0694">RNA-binding</keyword>
<keyword id="KW-0699">rRNA-binding</keyword>
<reference key="1">
    <citation type="submission" date="2007-05" db="EMBL/GenBank/DDBJ databases">
        <title>Complete sequence of Thermotoga petrophila RKU-1.</title>
        <authorList>
            <consortium name="US DOE Joint Genome Institute"/>
            <person name="Copeland A."/>
            <person name="Lucas S."/>
            <person name="Lapidus A."/>
            <person name="Barry K."/>
            <person name="Glavina del Rio T."/>
            <person name="Dalin E."/>
            <person name="Tice H."/>
            <person name="Pitluck S."/>
            <person name="Sims D."/>
            <person name="Brettin T."/>
            <person name="Bruce D."/>
            <person name="Detter J.C."/>
            <person name="Han C."/>
            <person name="Tapia R."/>
            <person name="Schmutz J."/>
            <person name="Larimer F."/>
            <person name="Land M."/>
            <person name="Hauser L."/>
            <person name="Kyrpides N."/>
            <person name="Mikhailova N."/>
            <person name="Nelson K."/>
            <person name="Gogarten J.P."/>
            <person name="Noll K."/>
            <person name="Richardson P."/>
        </authorList>
    </citation>
    <scope>NUCLEOTIDE SEQUENCE [LARGE SCALE GENOMIC DNA]</scope>
    <source>
        <strain>ATCC BAA-488 / DSM 13995 / JCM 10881 / RKU-1</strain>
    </source>
</reference>
<sequence>MSIKSGFVALAGKPNVGKSTFINVVMGRKVVIVSDKPQTTRNRINCIYTDRDSQIIFVDTPGIHKPLHRLGEYMVKAAVQALKGVDLILFMLDAADGFTKTDEHVAKIVSESGTKTIIAVNKIDVAGEEKAKAVGQLAKSMVENVVSVHYISALKGEGVFEVLEKIKEELPEGPQYYPEDMVTDRPLSFMAAEIIREKIFHLTRQEVPHSTAVVIEEIKDRPNGVLYIRANIYVERDSQKGILIGKNGSMIKKIGTLAREELEFLVGRKVYLDLNVKVKENWREKDFIILQEIGLKDDIK</sequence>
<name>ERA_THEP1</name>
<evidence type="ECO:0000255" key="1">
    <source>
        <dbReference type="HAMAP-Rule" id="MF_00367"/>
    </source>
</evidence>
<evidence type="ECO:0000255" key="2">
    <source>
        <dbReference type="PROSITE-ProRule" id="PRU01050"/>
    </source>
</evidence>
<comment type="function">
    <text evidence="1">An essential GTPase that binds both GDP and GTP, with rapid nucleotide exchange. Plays a role in 16S rRNA processing and 30S ribosomal subunit biogenesis and possibly also in cell cycle regulation and energy metabolism.</text>
</comment>
<comment type="subunit">
    <text evidence="1">Monomer.</text>
</comment>
<comment type="subcellular location">
    <subcellularLocation>
        <location>Cytoplasm</location>
    </subcellularLocation>
    <subcellularLocation>
        <location evidence="1">Cell inner membrane</location>
        <topology evidence="1">Peripheral membrane protein</topology>
    </subcellularLocation>
</comment>
<comment type="similarity">
    <text evidence="1 2">Belongs to the TRAFAC class TrmE-Era-EngA-EngB-Septin-like GTPase superfamily. Era GTPase family.</text>
</comment>
<organism>
    <name type="scientific">Thermotoga petrophila (strain ATCC BAA-488 / DSM 13995 / JCM 10881 / RKU-1)</name>
    <dbReference type="NCBI Taxonomy" id="390874"/>
    <lineage>
        <taxon>Bacteria</taxon>
        <taxon>Thermotogati</taxon>
        <taxon>Thermotogota</taxon>
        <taxon>Thermotogae</taxon>
        <taxon>Thermotogales</taxon>
        <taxon>Thermotogaceae</taxon>
        <taxon>Thermotoga</taxon>
    </lineage>
</organism>
<proteinExistence type="inferred from homology"/>
<feature type="chain" id="PRO_1000079763" description="GTPase Era">
    <location>
        <begin position="1"/>
        <end position="300"/>
    </location>
</feature>
<feature type="domain" description="Era-type G" evidence="2">
    <location>
        <begin position="4"/>
        <end position="172"/>
    </location>
</feature>
<feature type="domain" description="KH type-2" evidence="1">
    <location>
        <begin position="195"/>
        <end position="280"/>
    </location>
</feature>
<feature type="region of interest" description="G1" evidence="2">
    <location>
        <begin position="12"/>
        <end position="19"/>
    </location>
</feature>
<feature type="region of interest" description="G2" evidence="2">
    <location>
        <begin position="38"/>
        <end position="42"/>
    </location>
</feature>
<feature type="region of interest" description="G3" evidence="2">
    <location>
        <begin position="59"/>
        <end position="62"/>
    </location>
</feature>
<feature type="region of interest" description="G4" evidence="2">
    <location>
        <begin position="121"/>
        <end position="124"/>
    </location>
</feature>
<feature type="region of interest" description="G5" evidence="2">
    <location>
        <begin position="151"/>
        <end position="153"/>
    </location>
</feature>
<feature type="binding site" evidence="1">
    <location>
        <begin position="12"/>
        <end position="19"/>
    </location>
    <ligand>
        <name>GTP</name>
        <dbReference type="ChEBI" id="CHEBI:37565"/>
    </ligand>
</feature>
<feature type="binding site" evidence="1">
    <location>
        <begin position="59"/>
        <end position="63"/>
    </location>
    <ligand>
        <name>GTP</name>
        <dbReference type="ChEBI" id="CHEBI:37565"/>
    </ligand>
</feature>
<feature type="binding site" evidence="1">
    <location>
        <begin position="121"/>
        <end position="124"/>
    </location>
    <ligand>
        <name>GTP</name>
        <dbReference type="ChEBI" id="CHEBI:37565"/>
    </ligand>
</feature>
<gene>
    <name evidence="1" type="primary">era</name>
    <name type="ordered locus">Tpet_0080</name>
</gene>